<sequence>MMGGGLVMDQGMMFPGVHNFVDLLQQNGGDKNLGFGALVPQTSSGEQCVMGEGDLVDPPPESFPDAGEDDSDDDVEDIEELERRMWRDRMKLKRLKELQLSRGKDPAGGVVGDPSKPRQSQEQARRKKMSRAQDGILKYMLKMMEVCRAQGFVYGIIPEKGKPVSGASDNLRGWWKEKVRFDRNGPAAIAKYQADNAVPGFESELASGTGSPHSLQELQDTTLGSLLSALMQHCDPPQRRYPLEKGVPPPWWPTGDEEWWPELGIPKDQGPPPYKKPHDLKKAWKVSVLTAVIKHMSPDIEKIRRLVRQSKCLQDKMTAKEISTWLAVVKQEEELYLKLNPGARPPAPTGGITSAISFNASSSEYDVDVVDDCKGDEAGNQKAVVVADPTAFNLGAAMLNDKFLMPASMKEEATDVEFIQKRSASGAEPELMLNNRVYTCHNVQCPHSDYGYGFLDRNARNSHQYTCKYNDPLQQSTENKPSPPAIFPATYNTPNQALNNLDFGLPMDGQRSITELMNMYDNNFVANKNLSNDNATIMERPNAVNPRIQIEEGFFGQGSGIGGSNGGVFEDVNGMMQQPQQTTPAQQQFFIRDDTPFGNQMGDINGASEFRFGSGFNMSGAVEYPGAMQGQQKNDGASEFEELE</sequence>
<gene>
    <name evidence="4" type="primary">EIL1B</name>
    <name evidence="5" type="synonym">EIL1</name>
    <name evidence="8" type="ordered locus">Os03g0324200</name>
    <name evidence="7" type="ordered locus">LOC_Os03g20780</name>
</gene>
<keyword id="KW-0010">Activator</keyword>
<keyword id="KW-0238">DNA-binding</keyword>
<keyword id="KW-0936">Ethylene signaling pathway</keyword>
<keyword id="KW-0539">Nucleus</keyword>
<keyword id="KW-1185">Reference proteome</keyword>
<keyword id="KW-0346">Stress response</keyword>
<protein>
    <recommendedName>
        <fullName evidence="4">Protein ETHYLENE-INSENSITIVE 3-like 1b</fullName>
        <shortName evidence="4">EIN3-like protein 1b</shortName>
        <shortName evidence="4">OsEIL1b</shortName>
    </recommendedName>
    <alternativeName>
        <fullName evidence="5">OsEIL1</fullName>
    </alternativeName>
</protein>
<organism>
    <name type="scientific">Oryza sativa subsp. japonica</name>
    <name type="common">Rice</name>
    <dbReference type="NCBI Taxonomy" id="39947"/>
    <lineage>
        <taxon>Eukaryota</taxon>
        <taxon>Viridiplantae</taxon>
        <taxon>Streptophyta</taxon>
        <taxon>Embryophyta</taxon>
        <taxon>Tracheophyta</taxon>
        <taxon>Spermatophyta</taxon>
        <taxon>Magnoliopsida</taxon>
        <taxon>Liliopsida</taxon>
        <taxon>Poales</taxon>
        <taxon>Poaceae</taxon>
        <taxon>BOP clade</taxon>
        <taxon>Oryzoideae</taxon>
        <taxon>Oryzeae</taxon>
        <taxon>Oryzinae</taxon>
        <taxon>Oryza</taxon>
        <taxon>Oryza sativa</taxon>
    </lineage>
</organism>
<feature type="chain" id="PRO_0000445283" description="Protein ETHYLENE-INSENSITIVE 3-like 1b">
    <location>
        <begin position="1"/>
        <end position="644"/>
    </location>
</feature>
<feature type="region of interest" description="Disordered" evidence="1">
    <location>
        <begin position="47"/>
        <end position="75"/>
    </location>
</feature>
<feature type="region of interest" description="Disordered" evidence="1">
    <location>
        <begin position="97"/>
        <end position="131"/>
    </location>
</feature>
<feature type="compositionally biased region" description="Acidic residues" evidence="1">
    <location>
        <begin position="66"/>
        <end position="75"/>
    </location>
</feature>
<evidence type="ECO:0000256" key="1">
    <source>
        <dbReference type="SAM" id="MobiDB-lite"/>
    </source>
</evidence>
<evidence type="ECO:0000269" key="2">
    <source>
    </source>
</evidence>
<evidence type="ECO:0000269" key="3">
    <source>
    </source>
</evidence>
<evidence type="ECO:0000303" key="4">
    <source>
    </source>
</evidence>
<evidence type="ECO:0000303" key="5">
    <source>
    </source>
</evidence>
<evidence type="ECO:0000305" key="6"/>
<evidence type="ECO:0000312" key="7">
    <source>
        <dbReference type="EMBL" id="ABF95695.1"/>
    </source>
</evidence>
<evidence type="ECO:0000312" key="8">
    <source>
        <dbReference type="EMBL" id="BAS83969.1"/>
    </source>
</evidence>
<dbReference type="EMBL" id="AB074971">
    <property type="protein sequence ID" value="BAB78462.2"/>
    <property type="molecule type" value="mRNA"/>
</dbReference>
<dbReference type="EMBL" id="DP000009">
    <property type="protein sequence ID" value="ABF95695.1"/>
    <property type="molecule type" value="Genomic_DNA"/>
</dbReference>
<dbReference type="EMBL" id="DP000009">
    <property type="protein sequence ID" value="ABF95696.1"/>
    <property type="molecule type" value="Genomic_DNA"/>
</dbReference>
<dbReference type="EMBL" id="AP014959">
    <property type="protein sequence ID" value="BAS83969.1"/>
    <property type="molecule type" value="Genomic_DNA"/>
</dbReference>
<dbReference type="RefSeq" id="XP_015629857.1">
    <property type="nucleotide sequence ID" value="XM_015774371.1"/>
</dbReference>
<dbReference type="SMR" id="Q8W3M0"/>
<dbReference type="FunCoup" id="Q8W3M0">
    <property type="interactions" value="2247"/>
</dbReference>
<dbReference type="STRING" id="39947.Q8W3M0"/>
<dbReference type="PaxDb" id="39947-Q8W3M0"/>
<dbReference type="EnsemblPlants" id="Os03t0324200-01">
    <property type="protein sequence ID" value="Os03t0324200-01"/>
    <property type="gene ID" value="Os03g0324200"/>
</dbReference>
<dbReference type="Gramene" id="Os03t0324200-01">
    <property type="protein sequence ID" value="Os03t0324200-01"/>
    <property type="gene ID" value="Os03g0324200"/>
</dbReference>
<dbReference type="eggNOG" id="ENOG502QQSG">
    <property type="taxonomic scope" value="Eukaryota"/>
</dbReference>
<dbReference type="InParanoid" id="Q8W3M0"/>
<dbReference type="OMA" id="FQYDQCK"/>
<dbReference type="OrthoDB" id="2017676at2759"/>
<dbReference type="PlantReactome" id="R-OSA-5225756">
    <property type="pathway name" value="Ethylene mediated signaling"/>
</dbReference>
<dbReference type="Proteomes" id="UP000059680">
    <property type="component" value="Chromosome 3"/>
</dbReference>
<dbReference type="ExpressionAtlas" id="Q8W3M0">
    <property type="expression patterns" value="baseline and differential"/>
</dbReference>
<dbReference type="GO" id="GO:0005634">
    <property type="term" value="C:nucleus"/>
    <property type="evidence" value="ECO:0007669"/>
    <property type="project" value="UniProtKB-SubCell"/>
</dbReference>
<dbReference type="GO" id="GO:0003677">
    <property type="term" value="F:DNA binding"/>
    <property type="evidence" value="ECO:0000318"/>
    <property type="project" value="GO_Central"/>
</dbReference>
<dbReference type="GO" id="GO:0003700">
    <property type="term" value="F:DNA-binding transcription factor activity"/>
    <property type="evidence" value="ECO:0000314"/>
    <property type="project" value="UniProtKB"/>
</dbReference>
<dbReference type="GO" id="GO:0043565">
    <property type="term" value="F:sequence-specific DNA binding"/>
    <property type="evidence" value="ECO:0000314"/>
    <property type="project" value="UniProtKB"/>
</dbReference>
<dbReference type="GO" id="GO:0009873">
    <property type="term" value="P:ethylene-activated signaling pathway"/>
    <property type="evidence" value="ECO:0007669"/>
    <property type="project" value="UniProtKB-KW"/>
</dbReference>
<dbReference type="GO" id="GO:0045893">
    <property type="term" value="P:positive regulation of DNA-templated transcription"/>
    <property type="evidence" value="ECO:0000314"/>
    <property type="project" value="UniProtKB"/>
</dbReference>
<dbReference type="GO" id="GO:0010104">
    <property type="term" value="P:regulation of ethylene-activated signaling pathway"/>
    <property type="evidence" value="ECO:0000314"/>
    <property type="project" value="UniProtKB"/>
</dbReference>
<dbReference type="GO" id="GO:1903034">
    <property type="term" value="P:regulation of response to wounding"/>
    <property type="evidence" value="ECO:0000314"/>
    <property type="project" value="UniProtKB"/>
</dbReference>
<dbReference type="FunFam" id="1.10.3180.10:FF:000001">
    <property type="entry name" value="Ethylene insensitive 3-like 1"/>
    <property type="match status" value="1"/>
</dbReference>
<dbReference type="FunFam" id="1.10.3180.10:FF:000002">
    <property type="entry name" value="Ethylene insensitive 3-like 1"/>
    <property type="match status" value="1"/>
</dbReference>
<dbReference type="Gene3D" id="1.10.3180.10">
    <property type="entry name" value="DNA-binding domain of EIN3-like"/>
    <property type="match status" value="2"/>
</dbReference>
<dbReference type="InterPro" id="IPR006957">
    <property type="entry name" value="EIN3"/>
</dbReference>
<dbReference type="InterPro" id="IPR047091">
    <property type="entry name" value="EIN3-like_DNA-bd"/>
</dbReference>
<dbReference type="InterPro" id="IPR023278">
    <property type="entry name" value="Ethylene_insens-like_DNA-bd"/>
</dbReference>
<dbReference type="PANTHER" id="PTHR33305">
    <property type="entry name" value="ETHYLENE INSENSITIVE 3-LIKE 2 PROTEIN"/>
    <property type="match status" value="1"/>
</dbReference>
<dbReference type="PANTHER" id="PTHR33305:SF30">
    <property type="entry name" value="ETHYLENE INSENSITIVE 3-LIKE 3 PROTEIN"/>
    <property type="match status" value="1"/>
</dbReference>
<dbReference type="Pfam" id="PF04873">
    <property type="entry name" value="EIN3_DNA-bd"/>
    <property type="match status" value="1"/>
</dbReference>
<dbReference type="SUPFAM" id="SSF116768">
    <property type="entry name" value="DNA-binding domain of EIN3-like"/>
    <property type="match status" value="1"/>
</dbReference>
<accession>Q8W3M0</accession>
<comment type="function">
    <text evidence="2 3">Transcription factor acting as a positive regulator in the ethylene response pathway (PubMed:19798512). Involved in wound signaling by binding specifically to the DNA sequence 5'-ATGTACCT-3' found in the promoter of some wound-inducible genes (PubMed:19798512). Binds directly to the DNA sequence 5'-TGTTACAAATACC-3' in the promoter of the GA20OX2 gene to activate its expression at the transcriptional level during ethylene signaling (PubMed:30002253).</text>
</comment>
<comment type="subcellular location">
    <subcellularLocation>
        <location evidence="6">Nucleus</location>
    </subcellularLocation>
</comment>
<comment type="tissue specificity">
    <text evidence="2">Highly expressed in roots (PubMed:19798512). Expressed at low levels in leaves and panicles (PubMed:19798512).</text>
</comment>
<comment type="induction">
    <text evidence="2">Induced by wounding.</text>
</comment>
<comment type="similarity">
    <text evidence="6">Belongs to the EIN3 family.</text>
</comment>
<name>EIL1B_ORYSJ</name>
<reference key="1">
    <citation type="journal article" date="2009" name="Mol. Genet. Genomics">
        <title>Involvement of two rice ETHYLENE INSENSITIVE3-LIKE genes in wound signaling.</title>
        <authorList>
            <person name="Hiraga S."/>
            <person name="Sasaki K."/>
            <person name="Hibi T."/>
            <person name="Yoshida H."/>
            <person name="Uchida E."/>
            <person name="Kosugi S."/>
            <person name="Kato T."/>
            <person name="Mie T."/>
            <person name="Ito H."/>
            <person name="Katou S."/>
            <person name="Seo S."/>
            <person name="Matsui H."/>
            <person name="Ohashi Y."/>
            <person name="Mitsuhara I."/>
        </authorList>
    </citation>
    <scope>NUCLEOTIDE SEQUENCE [MRNA]</scope>
    <scope>FUNCTION</scope>
    <scope>TISSUE SPECIFICITY</scope>
    <scope>INDUCTION BY WOUNDING</scope>
</reference>
<reference key="2">
    <citation type="journal article" date="2005" name="Genome Res.">
        <title>Sequence, annotation, and analysis of synteny between rice chromosome 3 and diverged grass species.</title>
        <authorList>
            <consortium name="The rice chromosome 3 sequencing consortium"/>
            <person name="Buell C.R."/>
            <person name="Yuan Q."/>
            <person name="Ouyang S."/>
            <person name="Liu J."/>
            <person name="Zhu W."/>
            <person name="Wang A."/>
            <person name="Maiti R."/>
            <person name="Haas B."/>
            <person name="Wortman J."/>
            <person name="Pertea M."/>
            <person name="Jones K.M."/>
            <person name="Kim M."/>
            <person name="Overton L."/>
            <person name="Tsitrin T."/>
            <person name="Fadrosh D."/>
            <person name="Bera J."/>
            <person name="Weaver B."/>
            <person name="Jin S."/>
            <person name="Johri S."/>
            <person name="Reardon M."/>
            <person name="Webb K."/>
            <person name="Hill J."/>
            <person name="Moffat K."/>
            <person name="Tallon L."/>
            <person name="Van Aken S."/>
            <person name="Lewis M."/>
            <person name="Utterback T."/>
            <person name="Feldblyum T."/>
            <person name="Zismann V."/>
            <person name="Iobst S."/>
            <person name="Hsiao J."/>
            <person name="de Vazeille A.R."/>
            <person name="Salzberg S.L."/>
            <person name="White O."/>
            <person name="Fraser C.M."/>
            <person name="Yu Y."/>
            <person name="Kim H."/>
            <person name="Rambo T."/>
            <person name="Currie J."/>
            <person name="Collura K."/>
            <person name="Kernodle-Thompson S."/>
            <person name="Wei F."/>
            <person name="Kudrna K."/>
            <person name="Ammiraju J.S.S."/>
            <person name="Luo M."/>
            <person name="Goicoechea J.L."/>
            <person name="Wing R.A."/>
            <person name="Henry D."/>
            <person name="Oates R."/>
            <person name="Palmer M."/>
            <person name="Pries G."/>
            <person name="Saski C."/>
            <person name="Simmons J."/>
            <person name="Soderlund C."/>
            <person name="Nelson W."/>
            <person name="de la Bastide M."/>
            <person name="Spiegel L."/>
            <person name="Nascimento L."/>
            <person name="Huang E."/>
            <person name="Preston R."/>
            <person name="Zutavern T."/>
            <person name="Palmer L."/>
            <person name="O'Shaughnessy A."/>
            <person name="Dike S."/>
            <person name="McCombie W.R."/>
            <person name="Minx P."/>
            <person name="Cordum H."/>
            <person name="Wilson R."/>
            <person name="Jin W."/>
            <person name="Lee H.R."/>
            <person name="Jiang J."/>
            <person name="Jackson S."/>
        </authorList>
    </citation>
    <scope>NUCLEOTIDE SEQUENCE [LARGE SCALE GENOMIC DNA]</scope>
    <source>
        <strain>cv. Nipponbare</strain>
    </source>
</reference>
<reference key="3">
    <citation type="journal article" date="2005" name="Nature">
        <title>The map-based sequence of the rice genome.</title>
        <authorList>
            <consortium name="International rice genome sequencing project (IRGSP)"/>
        </authorList>
    </citation>
    <scope>NUCLEOTIDE SEQUENCE [LARGE SCALE GENOMIC DNA]</scope>
    <source>
        <strain>cv. Nipponbare</strain>
    </source>
</reference>
<reference key="4">
    <citation type="journal article" date="2008" name="Nucleic Acids Res.">
        <title>The rice annotation project database (RAP-DB): 2008 update.</title>
        <authorList>
            <consortium name="The rice annotation project (RAP)"/>
        </authorList>
    </citation>
    <scope>GENOME REANNOTATION</scope>
    <source>
        <strain>cv. Nipponbare</strain>
    </source>
</reference>
<reference key="5">
    <citation type="journal article" date="2006" name="Plant Mol. Biol.">
        <title>OsEIL1, a rice homolog of the Arabidopsis EIN3 regulates the ethylene response as a positive component.</title>
        <authorList>
            <person name="Mao C."/>
            <person name="Wang S."/>
            <person name="Jia Q."/>
            <person name="Wu P."/>
        </authorList>
    </citation>
    <scope>GENE FAMILY</scope>
</reference>
<reference key="6">
    <citation type="journal article" date="2018" name="Science">
        <title>Ethylene-gibberellin signaling underlies adaptation of rice to periodic flooding.</title>
        <authorList>
            <person name="Kuroha T."/>
            <person name="Nagai K."/>
            <person name="Gamuyao R."/>
            <person name="Wang D.R."/>
            <person name="Furuta T."/>
            <person name="Nakamori M."/>
            <person name="Kitaoka T."/>
            <person name="Adachi K."/>
            <person name="Minami A."/>
            <person name="Mori Y."/>
            <person name="Mashiguchi K."/>
            <person name="Seto Y."/>
            <person name="Yamaguchi S."/>
            <person name="Kojima M."/>
            <person name="Sakakibara H."/>
            <person name="Wu J."/>
            <person name="Ebana K."/>
            <person name="Mitsuda N."/>
            <person name="Ohme-Takagi M."/>
            <person name="Yanagisawa S."/>
            <person name="Yamasaki M."/>
            <person name="Yokoyama R."/>
            <person name="Nishitani K."/>
            <person name="Mochizuki T."/>
            <person name="Tamiya G."/>
            <person name="McCouch S.R."/>
            <person name="Ashikari M."/>
        </authorList>
    </citation>
    <scope>FUNCTION</scope>
</reference>
<proteinExistence type="evidence at transcript level"/>